<comment type="function">
    <text evidence="3">Involved in mitochondrial DNA repair.</text>
</comment>
<comment type="subcellular location">
    <subcellularLocation>
        <location evidence="2">Cytoplasm</location>
    </subcellularLocation>
    <subcellularLocation>
        <location evidence="3">Mitochondrion</location>
    </subcellularLocation>
</comment>
<comment type="similarity">
    <text evidence="3">Belongs to the DNA mismatch repair MutS family.</text>
</comment>
<evidence type="ECO:0000255" key="1"/>
<evidence type="ECO:0000269" key="2">
    <source>
    </source>
</evidence>
<evidence type="ECO:0000305" key="3"/>
<accession>O13921</accession>
<accession>O13700</accession>
<accession>Q9USD9</accession>
<organism>
    <name type="scientific">Schizosaccharomyces pombe (strain 972 / ATCC 24843)</name>
    <name type="common">Fission yeast</name>
    <dbReference type="NCBI Taxonomy" id="284812"/>
    <lineage>
        <taxon>Eukaryota</taxon>
        <taxon>Fungi</taxon>
        <taxon>Dikarya</taxon>
        <taxon>Ascomycota</taxon>
        <taxon>Taphrinomycotina</taxon>
        <taxon>Schizosaccharomycetes</taxon>
        <taxon>Schizosaccharomycetales</taxon>
        <taxon>Schizosaccharomycetaceae</taxon>
        <taxon>Schizosaccharomyces</taxon>
    </lineage>
</organism>
<gene>
    <name type="primary">msh1</name>
    <name type="ORF">SPAC13F5.01c</name>
    <name type="ORF">SPAC23C11.18c</name>
</gene>
<sequence>MPTWRYIFSLRSKSSFTKTWVPFTQIRNSSKSPKVGQKPILQGALGPPLDFIRPKEKVTLPPLLKEVSFQQKKFADCVLLTKVGNFYEMYFEQAEKIGPLLNLRVSKKKTSKSDVSMAGFPFFKLDRYLKILVEDLKKCVALSEEVIRPVDDLSSKNMYIRSVTRVITPGTLIDENFMNPYESNYILTVVFDPNFFSSDISNQGTAEDKDCFADCKIGLSWLDLSTGEFFTQDSNLQRLAGDLTRISPREIVLDESLKSFTTHPIYSFIQERKYFLSYVENRYQSLDCWNKFLEKEIDPSFIKYCTKLEVTAGCTLISYIADRLQNSHPNIQPPIRVSLNEYMIIGESAMKGLEIRSSLYQNRYTGSLLHAINKTVTKSGSRLLTRRLCAPSTNIVEINNRLDLVEKFKLLPELCSKVINLLKKSNDTHRILQHLLMGRGNSYDLLKMADNFSITKEIHSLLSPLESSSAFRLLLLNMHPHDELKQLINNAVDENALMKQKINEEEETEVIAQEAEEILQDENAQVEIVKKSLSSEFDIRQSFKENWVVKSNFNNNLRKLHEKLQSLFASYDKLQEDLSKRLGKKATLRKSPAKLYYVHLKLSGNETIERFIKKFTQAVLFQSTKSTASFQLPGWTSLGMDLENTKLHIHQEEQRVLKSITDEIVSHHKTLRSLANALDELDISTSLATLAQEQDFVRPVVDDSHAHTVIQGRHPIVEKGLSHKLIPFTPNDCFVGNGNVNIWLITGPNMAGKSTFLRQNAIISILAQIGSFVPASNARIGIVDQIFSRIGSADNLYQQKSTFMVEMMETSFILKNATRRSFVIMDEIGRGTTASDGIAIAYGCLKYLSTINHSRTLFATHAHQLTNLTKSFKNVECYCTNLSIDRDDHTFSFDYKLKKGVNYQSHGLKVAEMAGIPKNVLLAAEEVLTLLPNTSKPTSMK</sequence>
<keyword id="KW-0067">ATP-binding</keyword>
<keyword id="KW-0963">Cytoplasm</keyword>
<keyword id="KW-0227">DNA damage</keyword>
<keyword id="KW-0234">DNA repair</keyword>
<keyword id="KW-0238">DNA-binding</keyword>
<keyword id="KW-0496">Mitochondrion</keyword>
<keyword id="KW-0547">Nucleotide-binding</keyword>
<keyword id="KW-1185">Reference proteome</keyword>
<proteinExistence type="inferred from homology"/>
<reference key="1">
    <citation type="journal article" date="2002" name="Nature">
        <title>The genome sequence of Schizosaccharomyces pombe.</title>
        <authorList>
            <person name="Wood V."/>
            <person name="Gwilliam R."/>
            <person name="Rajandream M.A."/>
            <person name="Lyne M.H."/>
            <person name="Lyne R."/>
            <person name="Stewart A."/>
            <person name="Sgouros J.G."/>
            <person name="Peat N."/>
            <person name="Hayles J."/>
            <person name="Baker S.G."/>
            <person name="Basham D."/>
            <person name="Bowman S."/>
            <person name="Brooks K."/>
            <person name="Brown D."/>
            <person name="Brown S."/>
            <person name="Chillingworth T."/>
            <person name="Churcher C.M."/>
            <person name="Collins M."/>
            <person name="Connor R."/>
            <person name="Cronin A."/>
            <person name="Davis P."/>
            <person name="Feltwell T."/>
            <person name="Fraser A."/>
            <person name="Gentles S."/>
            <person name="Goble A."/>
            <person name="Hamlin N."/>
            <person name="Harris D.E."/>
            <person name="Hidalgo J."/>
            <person name="Hodgson G."/>
            <person name="Holroyd S."/>
            <person name="Hornsby T."/>
            <person name="Howarth S."/>
            <person name="Huckle E.J."/>
            <person name="Hunt S."/>
            <person name="Jagels K."/>
            <person name="James K.D."/>
            <person name="Jones L."/>
            <person name="Jones M."/>
            <person name="Leather S."/>
            <person name="McDonald S."/>
            <person name="McLean J."/>
            <person name="Mooney P."/>
            <person name="Moule S."/>
            <person name="Mungall K.L."/>
            <person name="Murphy L.D."/>
            <person name="Niblett D."/>
            <person name="Odell C."/>
            <person name="Oliver K."/>
            <person name="O'Neil S."/>
            <person name="Pearson D."/>
            <person name="Quail M.A."/>
            <person name="Rabbinowitsch E."/>
            <person name="Rutherford K.M."/>
            <person name="Rutter S."/>
            <person name="Saunders D."/>
            <person name="Seeger K."/>
            <person name="Sharp S."/>
            <person name="Skelton J."/>
            <person name="Simmonds M.N."/>
            <person name="Squares R."/>
            <person name="Squares S."/>
            <person name="Stevens K."/>
            <person name="Taylor K."/>
            <person name="Taylor R.G."/>
            <person name="Tivey A."/>
            <person name="Walsh S.V."/>
            <person name="Warren T."/>
            <person name="Whitehead S."/>
            <person name="Woodward J.R."/>
            <person name="Volckaert G."/>
            <person name="Aert R."/>
            <person name="Robben J."/>
            <person name="Grymonprez B."/>
            <person name="Weltjens I."/>
            <person name="Vanstreels E."/>
            <person name="Rieger M."/>
            <person name="Schaefer M."/>
            <person name="Mueller-Auer S."/>
            <person name="Gabel C."/>
            <person name="Fuchs M."/>
            <person name="Duesterhoeft A."/>
            <person name="Fritzc C."/>
            <person name="Holzer E."/>
            <person name="Moestl D."/>
            <person name="Hilbert H."/>
            <person name="Borzym K."/>
            <person name="Langer I."/>
            <person name="Beck A."/>
            <person name="Lehrach H."/>
            <person name="Reinhardt R."/>
            <person name="Pohl T.M."/>
            <person name="Eger P."/>
            <person name="Zimmermann W."/>
            <person name="Wedler H."/>
            <person name="Wambutt R."/>
            <person name="Purnelle B."/>
            <person name="Goffeau A."/>
            <person name="Cadieu E."/>
            <person name="Dreano S."/>
            <person name="Gloux S."/>
            <person name="Lelaure V."/>
            <person name="Mottier S."/>
            <person name="Galibert F."/>
            <person name="Aves S.J."/>
            <person name="Xiang Z."/>
            <person name="Hunt C."/>
            <person name="Moore K."/>
            <person name="Hurst S.M."/>
            <person name="Lucas M."/>
            <person name="Rochet M."/>
            <person name="Gaillardin C."/>
            <person name="Tallada V.A."/>
            <person name="Garzon A."/>
            <person name="Thode G."/>
            <person name="Daga R.R."/>
            <person name="Cruzado L."/>
            <person name="Jimenez J."/>
            <person name="Sanchez M."/>
            <person name="del Rey F."/>
            <person name="Benito J."/>
            <person name="Dominguez A."/>
            <person name="Revuelta J.L."/>
            <person name="Moreno S."/>
            <person name="Armstrong J."/>
            <person name="Forsburg S.L."/>
            <person name="Cerutti L."/>
            <person name="Lowe T."/>
            <person name="McCombie W.R."/>
            <person name="Paulsen I."/>
            <person name="Potashkin J."/>
            <person name="Shpakovski G.V."/>
            <person name="Ussery D."/>
            <person name="Barrell B.G."/>
            <person name="Nurse P."/>
        </authorList>
    </citation>
    <scope>NUCLEOTIDE SEQUENCE [LARGE SCALE GENOMIC DNA]</scope>
    <source>
        <strain>972 / ATCC 24843</strain>
    </source>
</reference>
<reference key="2">
    <citation type="journal article" date="2000" name="Genes Cells">
        <title>Large-scale screening of intracellular protein localization in living fission yeast cells by the use of a GFP-fusion genomic DNA library.</title>
        <authorList>
            <person name="Ding D.-Q."/>
            <person name="Tomita Y."/>
            <person name="Yamamoto A."/>
            <person name="Chikashige Y."/>
            <person name="Haraguchi T."/>
            <person name="Hiraoka Y."/>
        </authorList>
    </citation>
    <scope>NUCLEOTIDE SEQUENCE [LARGE SCALE GENOMIC DNA] OF 623-792</scope>
    <scope>SUBCELLULAR LOCATION</scope>
    <source>
        <strain>ATCC 38364 / 968</strain>
    </source>
</reference>
<protein>
    <recommendedName>
        <fullName>MutS protein homolog 1</fullName>
    </recommendedName>
</protein>
<name>MSH1_SCHPO</name>
<dbReference type="EMBL" id="CU329670">
    <property type="protein sequence ID" value="CAB11169.2"/>
    <property type="molecule type" value="Genomic_DNA"/>
</dbReference>
<dbReference type="EMBL" id="AB027833">
    <property type="protein sequence ID" value="BAA87137.1"/>
    <property type="molecule type" value="Genomic_DNA"/>
</dbReference>
<dbReference type="PIR" id="T38256">
    <property type="entry name" value="T37626"/>
</dbReference>
<dbReference type="RefSeq" id="NP_593649.2">
    <property type="nucleotide sequence ID" value="NM_001019080.3"/>
</dbReference>
<dbReference type="SMR" id="O13921"/>
<dbReference type="BioGRID" id="279280">
    <property type="interactions" value="19"/>
</dbReference>
<dbReference type="FunCoup" id="O13921">
    <property type="interactions" value="471"/>
</dbReference>
<dbReference type="STRING" id="284812.O13921"/>
<dbReference type="iPTMnet" id="O13921"/>
<dbReference type="PaxDb" id="4896-SPAC13F5.01c.1"/>
<dbReference type="EnsemblFungi" id="SPAC13F5.01c.1">
    <property type="protein sequence ID" value="SPAC13F5.01c.1:pep"/>
    <property type="gene ID" value="SPAC13F5.01c"/>
</dbReference>
<dbReference type="GeneID" id="2542833"/>
<dbReference type="KEGG" id="spo:2542833"/>
<dbReference type="PomBase" id="SPAC13F5.01c">
    <property type="gene designation" value="msh1"/>
</dbReference>
<dbReference type="VEuPathDB" id="FungiDB:SPAC13F5.01c"/>
<dbReference type="eggNOG" id="ENOG502QUUG">
    <property type="taxonomic scope" value="Eukaryota"/>
</dbReference>
<dbReference type="HOGENOM" id="CLU_002472_4_0_1"/>
<dbReference type="InParanoid" id="O13921"/>
<dbReference type="OMA" id="DTWIMRR"/>
<dbReference type="PhylomeDB" id="O13921"/>
<dbReference type="PRO" id="PR:O13921"/>
<dbReference type="Proteomes" id="UP000002485">
    <property type="component" value="Chromosome I"/>
</dbReference>
<dbReference type="GO" id="GO:0000262">
    <property type="term" value="C:mitochondrial chromosome"/>
    <property type="evidence" value="ECO:0000305"/>
    <property type="project" value="PomBase"/>
</dbReference>
<dbReference type="GO" id="GO:0005739">
    <property type="term" value="C:mitochondrion"/>
    <property type="evidence" value="ECO:0007005"/>
    <property type="project" value="PomBase"/>
</dbReference>
<dbReference type="GO" id="GO:0005634">
    <property type="term" value="C:nucleus"/>
    <property type="evidence" value="ECO:0000318"/>
    <property type="project" value="GO_Central"/>
</dbReference>
<dbReference type="GO" id="GO:0005524">
    <property type="term" value="F:ATP binding"/>
    <property type="evidence" value="ECO:0000250"/>
    <property type="project" value="PomBase"/>
</dbReference>
<dbReference type="GO" id="GO:0016887">
    <property type="term" value="F:ATP hydrolysis activity"/>
    <property type="evidence" value="ECO:0000305"/>
    <property type="project" value="PomBase"/>
</dbReference>
<dbReference type="GO" id="GO:0140664">
    <property type="term" value="F:ATP-dependent DNA damage sensor activity"/>
    <property type="evidence" value="ECO:0007669"/>
    <property type="project" value="InterPro"/>
</dbReference>
<dbReference type="GO" id="GO:0003690">
    <property type="term" value="F:double-stranded DNA binding"/>
    <property type="evidence" value="ECO:0000318"/>
    <property type="project" value="GO_Central"/>
</dbReference>
<dbReference type="GO" id="GO:0030983">
    <property type="term" value="F:mismatched DNA binding"/>
    <property type="evidence" value="ECO:0000255"/>
    <property type="project" value="PomBase"/>
</dbReference>
<dbReference type="GO" id="GO:0006298">
    <property type="term" value="P:mismatch repair"/>
    <property type="evidence" value="ECO:0000255"/>
    <property type="project" value="PomBase"/>
</dbReference>
<dbReference type="GO" id="GO:0043504">
    <property type="term" value="P:mitochondrial DNA repair"/>
    <property type="evidence" value="ECO:0000318"/>
    <property type="project" value="GO_Central"/>
</dbReference>
<dbReference type="FunFam" id="3.40.50.300:FF:001238">
    <property type="entry name" value="DNA mismatch repair protein"/>
    <property type="match status" value="1"/>
</dbReference>
<dbReference type="FunFam" id="1.10.1420.10:FF:000042">
    <property type="entry name" value="DNA mismatch repair protein Msh1"/>
    <property type="match status" value="1"/>
</dbReference>
<dbReference type="FunFam" id="1.10.1420.10:FF:000046">
    <property type="entry name" value="DNA mismatch repair protein Msh1"/>
    <property type="match status" value="1"/>
</dbReference>
<dbReference type="Gene3D" id="1.10.1420.10">
    <property type="match status" value="3"/>
</dbReference>
<dbReference type="Gene3D" id="3.40.1170.10">
    <property type="entry name" value="DNA repair protein MutS, domain I"/>
    <property type="match status" value="1"/>
</dbReference>
<dbReference type="Gene3D" id="3.30.420.110">
    <property type="entry name" value="MutS, connector domain"/>
    <property type="match status" value="1"/>
</dbReference>
<dbReference type="Gene3D" id="3.40.50.300">
    <property type="entry name" value="P-loop containing nucleotide triphosphate hydrolases"/>
    <property type="match status" value="1"/>
</dbReference>
<dbReference type="InterPro" id="IPR007695">
    <property type="entry name" value="DNA_mismatch_repair_MutS-lik_N"/>
</dbReference>
<dbReference type="InterPro" id="IPR017261">
    <property type="entry name" value="DNA_mismatch_repair_MutS/MSH"/>
</dbReference>
<dbReference type="InterPro" id="IPR000432">
    <property type="entry name" value="DNA_mismatch_repair_MutS_C"/>
</dbReference>
<dbReference type="InterPro" id="IPR007696">
    <property type="entry name" value="DNA_mismatch_repair_MutS_core"/>
</dbReference>
<dbReference type="InterPro" id="IPR016151">
    <property type="entry name" value="DNA_mismatch_repair_MutS_N"/>
</dbReference>
<dbReference type="InterPro" id="IPR036187">
    <property type="entry name" value="DNA_mismatch_repair_MutS_sf"/>
</dbReference>
<dbReference type="InterPro" id="IPR007860">
    <property type="entry name" value="DNA_mmatch_repair_MutS_con_dom"/>
</dbReference>
<dbReference type="InterPro" id="IPR045076">
    <property type="entry name" value="MutS"/>
</dbReference>
<dbReference type="InterPro" id="IPR036678">
    <property type="entry name" value="MutS_con_dom_sf"/>
</dbReference>
<dbReference type="InterPro" id="IPR027417">
    <property type="entry name" value="P-loop_NTPase"/>
</dbReference>
<dbReference type="PANTHER" id="PTHR11361:SF34">
    <property type="entry name" value="DNA MISMATCH REPAIR PROTEIN MSH1, MITOCHONDRIAL"/>
    <property type="match status" value="1"/>
</dbReference>
<dbReference type="PANTHER" id="PTHR11361">
    <property type="entry name" value="DNA MISMATCH REPAIR PROTEIN MUTS FAMILY MEMBER"/>
    <property type="match status" value="1"/>
</dbReference>
<dbReference type="Pfam" id="PF01624">
    <property type="entry name" value="MutS_I"/>
    <property type="match status" value="1"/>
</dbReference>
<dbReference type="Pfam" id="PF05188">
    <property type="entry name" value="MutS_II"/>
    <property type="match status" value="1"/>
</dbReference>
<dbReference type="Pfam" id="PF05192">
    <property type="entry name" value="MutS_III"/>
    <property type="match status" value="1"/>
</dbReference>
<dbReference type="Pfam" id="PF00488">
    <property type="entry name" value="MutS_V"/>
    <property type="match status" value="1"/>
</dbReference>
<dbReference type="PIRSF" id="PIRSF037677">
    <property type="entry name" value="DNA_mis_repair_Msh6"/>
    <property type="match status" value="1"/>
</dbReference>
<dbReference type="SMART" id="SM00534">
    <property type="entry name" value="MUTSac"/>
    <property type="match status" value="1"/>
</dbReference>
<dbReference type="SMART" id="SM00533">
    <property type="entry name" value="MUTSd"/>
    <property type="match status" value="1"/>
</dbReference>
<dbReference type="SUPFAM" id="SSF55271">
    <property type="entry name" value="DNA repair protein MutS, domain I"/>
    <property type="match status" value="1"/>
</dbReference>
<dbReference type="SUPFAM" id="SSF53150">
    <property type="entry name" value="DNA repair protein MutS, domain II"/>
    <property type="match status" value="1"/>
</dbReference>
<dbReference type="SUPFAM" id="SSF48334">
    <property type="entry name" value="DNA repair protein MutS, domain III"/>
    <property type="match status" value="1"/>
</dbReference>
<dbReference type="SUPFAM" id="SSF52540">
    <property type="entry name" value="P-loop containing nucleoside triphosphate hydrolases"/>
    <property type="match status" value="1"/>
</dbReference>
<dbReference type="PROSITE" id="PS00486">
    <property type="entry name" value="DNA_MISMATCH_REPAIR_2"/>
    <property type="match status" value="1"/>
</dbReference>
<feature type="chain" id="PRO_0000115180" description="MutS protein homolog 1">
    <location>
        <begin position="1"/>
        <end position="941"/>
    </location>
</feature>
<feature type="binding site" evidence="1">
    <location>
        <begin position="747"/>
        <end position="754"/>
    </location>
    <ligand>
        <name>ATP</name>
        <dbReference type="ChEBI" id="CHEBI:30616"/>
    </ligand>
</feature>